<feature type="chain" id="PRO_0000187587" description="Uroporphyrinogen decarboxylase">
    <location>
        <begin position="1"/>
        <end position="358"/>
    </location>
</feature>
<feature type="binding site" evidence="1">
    <location>
        <begin position="29"/>
        <end position="33"/>
    </location>
    <ligand>
        <name>substrate</name>
    </ligand>
</feature>
<feature type="binding site" evidence="1">
    <location>
        <position position="48"/>
    </location>
    <ligand>
        <name>substrate</name>
    </ligand>
</feature>
<feature type="binding site" evidence="1">
    <location>
        <position position="79"/>
    </location>
    <ligand>
        <name>substrate</name>
    </ligand>
</feature>
<feature type="binding site" evidence="1">
    <location>
        <position position="155"/>
    </location>
    <ligand>
        <name>substrate</name>
    </ligand>
</feature>
<feature type="binding site" evidence="1">
    <location>
        <position position="210"/>
    </location>
    <ligand>
        <name>substrate</name>
    </ligand>
</feature>
<feature type="binding site" evidence="1">
    <location>
        <position position="330"/>
    </location>
    <ligand>
        <name>substrate</name>
    </ligand>
</feature>
<feature type="site" description="Transition state stabilizer" evidence="1">
    <location>
        <position position="79"/>
    </location>
</feature>
<organism>
    <name type="scientific">Bordetella pertussis (strain Tohama I / ATCC BAA-589 / NCTC 13251)</name>
    <dbReference type="NCBI Taxonomy" id="257313"/>
    <lineage>
        <taxon>Bacteria</taxon>
        <taxon>Pseudomonadati</taxon>
        <taxon>Pseudomonadota</taxon>
        <taxon>Betaproteobacteria</taxon>
        <taxon>Burkholderiales</taxon>
        <taxon>Alcaligenaceae</taxon>
        <taxon>Bordetella</taxon>
    </lineage>
</organism>
<gene>
    <name evidence="1" type="primary">hemE</name>
    <name type="ordered locus">BP3291</name>
</gene>
<sequence length="358" mass="39270">MSVAPLKNDVFLRALLREPVPYTPIWLMRQAGRYLPEYNATRARAGSFMGLAQNPDYACEVTLQPLARYPLDAAILFSDILTVPHAMGLGLDFAPGEGPRFAHPVRDESDVAKLAVPDMDSLRYVFDAVRTIRRELDGRVPLIGFAGSPWTIACYMAEGRGSDDYRLIKSMLYGRPDLLHRILEINAEATRHYLNAQIDAGAQAVMLFDSWGGVLADGLFQQFSLAYTRRVVEGLTREREGRRVPVIVFTKGGGQWLEEIAACGCDAVGLDWTVNLGAARRRVTDAVALQGNLDPMTLFGGAQAVRAEARRTLDAFGPVGKGGHVFNLGHGISQYSPPEVVSELVDEVHTYSRALHAG</sequence>
<proteinExistence type="inferred from homology"/>
<accession>Q7VU41</accession>
<keyword id="KW-0963">Cytoplasm</keyword>
<keyword id="KW-0210">Decarboxylase</keyword>
<keyword id="KW-0456">Lyase</keyword>
<keyword id="KW-0627">Porphyrin biosynthesis</keyword>
<keyword id="KW-1185">Reference proteome</keyword>
<comment type="function">
    <text evidence="1">Catalyzes the decarboxylation of four acetate groups of uroporphyrinogen-III to yield coproporphyrinogen-III.</text>
</comment>
<comment type="catalytic activity">
    <reaction evidence="1">
        <text>uroporphyrinogen III + 4 H(+) = coproporphyrinogen III + 4 CO2</text>
        <dbReference type="Rhea" id="RHEA:19865"/>
        <dbReference type="ChEBI" id="CHEBI:15378"/>
        <dbReference type="ChEBI" id="CHEBI:16526"/>
        <dbReference type="ChEBI" id="CHEBI:57308"/>
        <dbReference type="ChEBI" id="CHEBI:57309"/>
        <dbReference type="EC" id="4.1.1.37"/>
    </reaction>
</comment>
<comment type="pathway">
    <text evidence="1">Porphyrin-containing compound metabolism; protoporphyrin-IX biosynthesis; coproporphyrinogen-III from 5-aminolevulinate: step 4/4.</text>
</comment>
<comment type="subunit">
    <text evidence="1">Homodimer.</text>
</comment>
<comment type="subcellular location">
    <subcellularLocation>
        <location evidence="1">Cytoplasm</location>
    </subcellularLocation>
</comment>
<comment type="similarity">
    <text evidence="1">Belongs to the uroporphyrinogen decarboxylase family.</text>
</comment>
<evidence type="ECO:0000255" key="1">
    <source>
        <dbReference type="HAMAP-Rule" id="MF_00218"/>
    </source>
</evidence>
<dbReference type="EC" id="4.1.1.37" evidence="1"/>
<dbReference type="EMBL" id="BX640421">
    <property type="protein sequence ID" value="CAE43556.1"/>
    <property type="molecule type" value="Genomic_DNA"/>
</dbReference>
<dbReference type="RefSeq" id="NP_881833.1">
    <property type="nucleotide sequence ID" value="NC_002929.2"/>
</dbReference>
<dbReference type="RefSeq" id="WP_010931389.1">
    <property type="nucleotide sequence ID" value="NZ_CP039022.1"/>
</dbReference>
<dbReference type="SMR" id="Q7VU41"/>
<dbReference type="STRING" id="257313.BP3291"/>
<dbReference type="PaxDb" id="257313-BP3291"/>
<dbReference type="GeneID" id="69603217"/>
<dbReference type="KEGG" id="bpe:BP3291"/>
<dbReference type="PATRIC" id="fig|257313.5.peg.3563"/>
<dbReference type="eggNOG" id="COG0407">
    <property type="taxonomic scope" value="Bacteria"/>
</dbReference>
<dbReference type="HOGENOM" id="CLU_040933_0_0_4"/>
<dbReference type="UniPathway" id="UPA00251">
    <property type="reaction ID" value="UER00321"/>
</dbReference>
<dbReference type="Proteomes" id="UP000002676">
    <property type="component" value="Chromosome"/>
</dbReference>
<dbReference type="GO" id="GO:0005829">
    <property type="term" value="C:cytosol"/>
    <property type="evidence" value="ECO:0007669"/>
    <property type="project" value="TreeGrafter"/>
</dbReference>
<dbReference type="GO" id="GO:0004853">
    <property type="term" value="F:uroporphyrinogen decarboxylase activity"/>
    <property type="evidence" value="ECO:0007669"/>
    <property type="project" value="UniProtKB-UniRule"/>
</dbReference>
<dbReference type="GO" id="GO:0019353">
    <property type="term" value="P:protoporphyrinogen IX biosynthetic process from glutamate"/>
    <property type="evidence" value="ECO:0007669"/>
    <property type="project" value="TreeGrafter"/>
</dbReference>
<dbReference type="CDD" id="cd00717">
    <property type="entry name" value="URO-D"/>
    <property type="match status" value="1"/>
</dbReference>
<dbReference type="FunFam" id="3.20.20.210:FF:000001">
    <property type="entry name" value="Uroporphyrinogen decarboxylase"/>
    <property type="match status" value="1"/>
</dbReference>
<dbReference type="Gene3D" id="3.20.20.210">
    <property type="match status" value="1"/>
</dbReference>
<dbReference type="HAMAP" id="MF_00218">
    <property type="entry name" value="URO_D"/>
    <property type="match status" value="1"/>
</dbReference>
<dbReference type="InterPro" id="IPR038071">
    <property type="entry name" value="UROD/MetE-like_sf"/>
</dbReference>
<dbReference type="InterPro" id="IPR006361">
    <property type="entry name" value="Uroporphyrinogen_deCO2ase_HemE"/>
</dbReference>
<dbReference type="InterPro" id="IPR000257">
    <property type="entry name" value="Uroporphyrinogen_deCOase"/>
</dbReference>
<dbReference type="NCBIfam" id="TIGR01464">
    <property type="entry name" value="hemE"/>
    <property type="match status" value="1"/>
</dbReference>
<dbReference type="PANTHER" id="PTHR21091">
    <property type="entry name" value="METHYLTETRAHYDROFOLATE:HOMOCYSTEINE METHYLTRANSFERASE RELATED"/>
    <property type="match status" value="1"/>
</dbReference>
<dbReference type="PANTHER" id="PTHR21091:SF169">
    <property type="entry name" value="UROPORPHYRINOGEN DECARBOXYLASE"/>
    <property type="match status" value="1"/>
</dbReference>
<dbReference type="Pfam" id="PF01208">
    <property type="entry name" value="URO-D"/>
    <property type="match status" value="1"/>
</dbReference>
<dbReference type="SUPFAM" id="SSF51726">
    <property type="entry name" value="UROD/MetE-like"/>
    <property type="match status" value="1"/>
</dbReference>
<dbReference type="PROSITE" id="PS00906">
    <property type="entry name" value="UROD_1"/>
    <property type="match status" value="1"/>
</dbReference>
<dbReference type="PROSITE" id="PS00907">
    <property type="entry name" value="UROD_2"/>
    <property type="match status" value="1"/>
</dbReference>
<name>DCUP_BORPE</name>
<protein>
    <recommendedName>
        <fullName evidence="1">Uroporphyrinogen decarboxylase</fullName>
        <shortName evidence="1">UPD</shortName>
        <shortName evidence="1">URO-D</shortName>
        <ecNumber evidence="1">4.1.1.37</ecNumber>
    </recommendedName>
</protein>
<reference key="1">
    <citation type="journal article" date="2003" name="Nat. Genet.">
        <title>Comparative analysis of the genome sequences of Bordetella pertussis, Bordetella parapertussis and Bordetella bronchiseptica.</title>
        <authorList>
            <person name="Parkhill J."/>
            <person name="Sebaihia M."/>
            <person name="Preston A."/>
            <person name="Murphy L.D."/>
            <person name="Thomson N.R."/>
            <person name="Harris D.E."/>
            <person name="Holden M.T.G."/>
            <person name="Churcher C.M."/>
            <person name="Bentley S.D."/>
            <person name="Mungall K.L."/>
            <person name="Cerdeno-Tarraga A.-M."/>
            <person name="Temple L."/>
            <person name="James K.D."/>
            <person name="Harris B."/>
            <person name="Quail M.A."/>
            <person name="Achtman M."/>
            <person name="Atkin R."/>
            <person name="Baker S."/>
            <person name="Basham D."/>
            <person name="Bason N."/>
            <person name="Cherevach I."/>
            <person name="Chillingworth T."/>
            <person name="Collins M."/>
            <person name="Cronin A."/>
            <person name="Davis P."/>
            <person name="Doggett J."/>
            <person name="Feltwell T."/>
            <person name="Goble A."/>
            <person name="Hamlin N."/>
            <person name="Hauser H."/>
            <person name="Holroyd S."/>
            <person name="Jagels K."/>
            <person name="Leather S."/>
            <person name="Moule S."/>
            <person name="Norberczak H."/>
            <person name="O'Neil S."/>
            <person name="Ormond D."/>
            <person name="Price C."/>
            <person name="Rabbinowitsch E."/>
            <person name="Rutter S."/>
            <person name="Sanders M."/>
            <person name="Saunders D."/>
            <person name="Seeger K."/>
            <person name="Sharp S."/>
            <person name="Simmonds M."/>
            <person name="Skelton J."/>
            <person name="Squares R."/>
            <person name="Squares S."/>
            <person name="Stevens K."/>
            <person name="Unwin L."/>
            <person name="Whitehead S."/>
            <person name="Barrell B.G."/>
            <person name="Maskell D.J."/>
        </authorList>
    </citation>
    <scope>NUCLEOTIDE SEQUENCE [LARGE SCALE GENOMIC DNA]</scope>
    <source>
        <strain>Tohama I / ATCC BAA-589 / NCTC 13251</strain>
    </source>
</reference>